<keyword id="KW-0150">Chloroplast</keyword>
<keyword id="KW-0934">Plastid</keyword>
<keyword id="KW-0687">Ribonucleoprotein</keyword>
<keyword id="KW-0689">Ribosomal protein</keyword>
<keyword id="KW-0694">RNA-binding</keyword>
<keyword id="KW-0699">rRNA-binding</keyword>
<reference key="1">
    <citation type="journal article" date="2006" name="Plant Cell Rep.">
        <title>Complete sequence and organization of the cucumber (Cucumis sativus L. cv. Baekmibaekdadagi) chloroplast genome.</title>
        <authorList>
            <person name="Kim J.-S."/>
            <person name="Jung J.D."/>
            <person name="Lee J.-A."/>
            <person name="Park H.-W."/>
            <person name="Oh K.-H."/>
            <person name="Jeong W.J."/>
            <person name="Choi D.-W."/>
            <person name="Liu J.R."/>
            <person name="Cho K.Y."/>
        </authorList>
    </citation>
    <scope>NUCLEOTIDE SEQUENCE [LARGE SCALE GENOMIC DNA]</scope>
    <source>
        <strain>cv. Baekmibaekdadagi</strain>
    </source>
</reference>
<reference key="2">
    <citation type="journal article" date="2007" name="Cell. Mol. Biol. Lett.">
        <title>The complete structure of the cucumber (Cucumis sativus L.) chloroplast genome: its composition and comparative analysis.</title>
        <authorList>
            <person name="Plader W.W."/>
            <person name="Yukawa Y."/>
            <person name="Sugiura M."/>
            <person name="Malepszy S."/>
        </authorList>
    </citation>
    <scope>NUCLEOTIDE SEQUENCE [LARGE SCALE GENOMIC DNA]</scope>
    <source>
        <strain>cv. Borszczagowski</strain>
    </source>
</reference>
<reference key="3">
    <citation type="journal article" date="2007" name="Genome">
        <title>Sequencing cucumber (Cucumis sativus L.) chloroplast genomes identifies differences between chilling-tolerant and -susceptible cucumber lines.</title>
        <authorList>
            <person name="Chung S.-M."/>
            <person name="Gordon V.S."/>
            <person name="Staub J.E."/>
        </authorList>
    </citation>
    <scope>NUCLEOTIDE SEQUENCE [LARGE SCALE GENOMIC DNA]</scope>
    <source>
        <strain>cv. Chipper</strain>
        <strain>cv. Gy14</strain>
    </source>
</reference>
<organism>
    <name type="scientific">Cucumis sativus</name>
    <name type="common">Cucumber</name>
    <dbReference type="NCBI Taxonomy" id="3659"/>
    <lineage>
        <taxon>Eukaryota</taxon>
        <taxon>Viridiplantae</taxon>
        <taxon>Streptophyta</taxon>
        <taxon>Embryophyta</taxon>
        <taxon>Tracheophyta</taxon>
        <taxon>Spermatophyta</taxon>
        <taxon>Magnoliopsida</taxon>
        <taxon>eudicotyledons</taxon>
        <taxon>Gunneridae</taxon>
        <taxon>Pentapetalae</taxon>
        <taxon>rosids</taxon>
        <taxon>fabids</taxon>
        <taxon>Cucurbitales</taxon>
        <taxon>Cucurbitaceae</taxon>
        <taxon>Benincaseae</taxon>
        <taxon>Cucumis</taxon>
    </lineage>
</organism>
<protein>
    <recommendedName>
        <fullName evidence="2">Large ribosomal subunit protein uL22c</fullName>
    </recommendedName>
    <alternativeName>
        <fullName>50S ribosomal protein L22, chloroplastic</fullName>
    </alternativeName>
</protein>
<geneLocation type="chloroplast"/>
<sequence length="162" mass="18855">MIKTKKNRYEVYALGQHICMSPHKARRVIDQIRGRSYEETMMILELMPYRACYPILKLVYSAAANASHNMGFNERDLVISKAEVNQGTTVKKLKPRAQGRSYPIKRPTCSITIVLKNTSVNEEEFKRYQYTINQPGGLITKEKYTDMRCYDMYNNGGLWDKK</sequence>
<accession>Q4VZM9</accession>
<accession>A5J1X4</accession>
<feature type="chain" id="PRO_0000243235" description="Large ribosomal subunit protein uL22c">
    <location>
        <begin position="1"/>
        <end position="162"/>
    </location>
</feature>
<gene>
    <name type="primary">rpl22</name>
    <name type="ordered locus">CsCp081</name>
</gene>
<comment type="function">
    <text evidence="1">This protein binds specifically to 23S rRNA.</text>
</comment>
<comment type="function">
    <text evidence="1">The globular domain of the protein is located near the polypeptide exit tunnel on the outside of the subunit, while an extended beta-hairpin is found that lines the wall of the exit tunnel in the center of the 70S ribosome.</text>
</comment>
<comment type="subunit">
    <text evidence="1">Part of the 50S ribosomal subunit.</text>
</comment>
<comment type="subcellular location">
    <subcellularLocation>
        <location>Plastid</location>
        <location>Chloroplast</location>
    </subcellularLocation>
</comment>
<comment type="similarity">
    <text evidence="2">Belongs to the universal ribosomal protein uL22 family.</text>
</comment>
<comment type="sequence caution" evidence="2">
    <conflict type="erroneous initiation">
        <sequence resource="EMBL-CDS" id="ABI97456"/>
    </conflict>
</comment>
<comment type="sequence caution" evidence="2">
    <conflict type="erroneous initiation">
        <sequence resource="EMBL-CDS" id="ABI98785"/>
    </conflict>
</comment>
<dbReference type="EMBL" id="DQ119058">
    <property type="protein sequence ID" value="AAZ94689.1"/>
    <property type="molecule type" value="Genomic_DNA"/>
</dbReference>
<dbReference type="EMBL" id="AJ970307">
    <property type="protein sequence ID" value="CAJ00798.1"/>
    <property type="molecule type" value="Genomic_DNA"/>
</dbReference>
<dbReference type="EMBL" id="DQ865975">
    <property type="protein sequence ID" value="ABI97456.1"/>
    <property type="status" value="ALT_INIT"/>
    <property type="molecule type" value="Genomic_DNA"/>
</dbReference>
<dbReference type="EMBL" id="DQ865976">
    <property type="protein sequence ID" value="ABI98785.1"/>
    <property type="status" value="ALT_INIT"/>
    <property type="molecule type" value="Genomic_DNA"/>
</dbReference>
<dbReference type="RefSeq" id="YP_247639.1">
    <property type="nucleotide sequence ID" value="NC_007144.1"/>
</dbReference>
<dbReference type="SMR" id="Q4VZM9"/>
<dbReference type="GeneID" id="3429295"/>
<dbReference type="KEGG" id="csv:3429295"/>
<dbReference type="OrthoDB" id="1840754at2759"/>
<dbReference type="GO" id="GO:0009507">
    <property type="term" value="C:chloroplast"/>
    <property type="evidence" value="ECO:0007669"/>
    <property type="project" value="UniProtKB-SubCell"/>
</dbReference>
<dbReference type="GO" id="GO:0015934">
    <property type="term" value="C:large ribosomal subunit"/>
    <property type="evidence" value="ECO:0007669"/>
    <property type="project" value="InterPro"/>
</dbReference>
<dbReference type="GO" id="GO:0019843">
    <property type="term" value="F:rRNA binding"/>
    <property type="evidence" value="ECO:0007669"/>
    <property type="project" value="UniProtKB-UniRule"/>
</dbReference>
<dbReference type="GO" id="GO:0003735">
    <property type="term" value="F:structural constituent of ribosome"/>
    <property type="evidence" value="ECO:0007669"/>
    <property type="project" value="InterPro"/>
</dbReference>
<dbReference type="GO" id="GO:0006412">
    <property type="term" value="P:translation"/>
    <property type="evidence" value="ECO:0007669"/>
    <property type="project" value="UniProtKB-UniRule"/>
</dbReference>
<dbReference type="CDD" id="cd00336">
    <property type="entry name" value="Ribosomal_L22"/>
    <property type="match status" value="1"/>
</dbReference>
<dbReference type="FunFam" id="3.90.470.10:FF:000006">
    <property type="entry name" value="50S ribosomal protein L22, chloroplastic"/>
    <property type="match status" value="1"/>
</dbReference>
<dbReference type="Gene3D" id="3.90.470.10">
    <property type="entry name" value="Ribosomal protein L22/L17"/>
    <property type="match status" value="1"/>
</dbReference>
<dbReference type="HAMAP" id="MF_01331_B">
    <property type="entry name" value="Ribosomal_uL22_B"/>
    <property type="match status" value="1"/>
</dbReference>
<dbReference type="InterPro" id="IPR001063">
    <property type="entry name" value="Ribosomal_uL22"/>
</dbReference>
<dbReference type="InterPro" id="IPR005727">
    <property type="entry name" value="Ribosomal_uL22_bac/chlpt-type"/>
</dbReference>
<dbReference type="InterPro" id="IPR047867">
    <property type="entry name" value="Ribosomal_uL22_bac/org-type"/>
</dbReference>
<dbReference type="InterPro" id="IPR036394">
    <property type="entry name" value="Ribosomal_uL22_sf"/>
</dbReference>
<dbReference type="NCBIfam" id="TIGR01044">
    <property type="entry name" value="rplV_bact"/>
    <property type="match status" value="1"/>
</dbReference>
<dbReference type="PANTHER" id="PTHR13501">
    <property type="entry name" value="CHLOROPLAST 50S RIBOSOMAL PROTEIN L22-RELATED"/>
    <property type="match status" value="1"/>
</dbReference>
<dbReference type="PANTHER" id="PTHR13501:SF10">
    <property type="entry name" value="LARGE RIBOSOMAL SUBUNIT PROTEIN UL22M"/>
    <property type="match status" value="1"/>
</dbReference>
<dbReference type="Pfam" id="PF00237">
    <property type="entry name" value="Ribosomal_L22"/>
    <property type="match status" value="1"/>
</dbReference>
<dbReference type="SUPFAM" id="SSF54843">
    <property type="entry name" value="Ribosomal protein L22"/>
    <property type="match status" value="1"/>
</dbReference>
<proteinExistence type="inferred from homology"/>
<evidence type="ECO:0000250" key="1"/>
<evidence type="ECO:0000305" key="2"/>
<name>RK22_CUCSA</name>